<proteinExistence type="inferred from homology"/>
<organism>
    <name type="scientific">Tupiella akineta</name>
    <name type="common">Green alga</name>
    <name type="synonym">Pseudendoclonium akinetum</name>
    <dbReference type="NCBI Taxonomy" id="160070"/>
    <lineage>
        <taxon>Eukaryota</taxon>
        <taxon>Viridiplantae</taxon>
        <taxon>Chlorophyta</taxon>
        <taxon>Ulvophyceae</taxon>
        <taxon>OUU clade</taxon>
        <taxon>Ulotrichales</taxon>
        <taxon>Tupiellaceae</taxon>
        <taxon>Tupiella</taxon>
    </lineage>
</organism>
<gene>
    <name evidence="1" type="primary">rpl32</name>
</gene>
<reference key="1">
    <citation type="journal article" date="2005" name="Mol. Biol. Evol.">
        <title>The chloroplast genome sequence of the green alga Pseudendoclonium akinetum (Ulvophyceae) reveals unusual structural features and new insights into the branching order of chlorophyte lineages.</title>
        <authorList>
            <person name="Pombert J.-F."/>
            <person name="Otis C."/>
            <person name="Lemieux C."/>
            <person name="Turmel M."/>
        </authorList>
    </citation>
    <scope>NUCLEOTIDE SEQUENCE [LARGE SCALE GENOMIC DNA]</scope>
    <source>
        <strain>UTEX 1912</strain>
    </source>
</reference>
<name>RK32_TUPAK</name>
<evidence type="ECO:0000255" key="1">
    <source>
        <dbReference type="HAMAP-Rule" id="MF_00340"/>
    </source>
</evidence>
<evidence type="ECO:0000305" key="2"/>
<comment type="subcellular location">
    <subcellularLocation>
        <location>Plastid</location>
        <location>Chloroplast</location>
    </subcellularLocation>
</comment>
<comment type="similarity">
    <text evidence="1">Belongs to the bacterial ribosomal protein bL32 family.</text>
</comment>
<accession>Q3ZJ05</accession>
<feature type="chain" id="PRO_0000276485" description="Large ribosomal subunit protein bL32c">
    <location>
        <begin position="1"/>
        <end position="56"/>
    </location>
</feature>
<protein>
    <recommendedName>
        <fullName evidence="1">Large ribosomal subunit protein bL32c</fullName>
    </recommendedName>
    <alternativeName>
        <fullName evidence="2">50S ribosomal protein L32, chloroplastic</fullName>
    </alternativeName>
</protein>
<dbReference type="EMBL" id="AY835431">
    <property type="protein sequence ID" value="AAV80684.1"/>
    <property type="molecule type" value="Genomic_DNA"/>
</dbReference>
<dbReference type="RefSeq" id="YP_636262.1">
    <property type="nucleotide sequence ID" value="NC_008114.1"/>
</dbReference>
<dbReference type="SMR" id="Q3ZJ05"/>
<dbReference type="GeneID" id="4108826"/>
<dbReference type="GO" id="GO:0009507">
    <property type="term" value="C:chloroplast"/>
    <property type="evidence" value="ECO:0007669"/>
    <property type="project" value="UniProtKB-SubCell"/>
</dbReference>
<dbReference type="GO" id="GO:0015934">
    <property type="term" value="C:large ribosomal subunit"/>
    <property type="evidence" value="ECO:0007669"/>
    <property type="project" value="InterPro"/>
</dbReference>
<dbReference type="GO" id="GO:0003735">
    <property type="term" value="F:structural constituent of ribosome"/>
    <property type="evidence" value="ECO:0007669"/>
    <property type="project" value="InterPro"/>
</dbReference>
<dbReference type="GO" id="GO:0006412">
    <property type="term" value="P:translation"/>
    <property type="evidence" value="ECO:0007669"/>
    <property type="project" value="UniProtKB-UniRule"/>
</dbReference>
<dbReference type="HAMAP" id="MF_00340">
    <property type="entry name" value="Ribosomal_bL32"/>
    <property type="match status" value="1"/>
</dbReference>
<dbReference type="InterPro" id="IPR002677">
    <property type="entry name" value="Ribosomal_bL32"/>
</dbReference>
<dbReference type="InterPro" id="IPR011332">
    <property type="entry name" value="Ribosomal_zn-bd"/>
</dbReference>
<dbReference type="NCBIfam" id="TIGR01031">
    <property type="entry name" value="rpmF_bact"/>
    <property type="match status" value="1"/>
</dbReference>
<dbReference type="Pfam" id="PF01783">
    <property type="entry name" value="Ribosomal_L32p"/>
    <property type="match status" value="1"/>
</dbReference>
<dbReference type="SUPFAM" id="SSF57829">
    <property type="entry name" value="Zn-binding ribosomal proteins"/>
    <property type="match status" value="1"/>
</dbReference>
<geneLocation type="chloroplast"/>
<keyword id="KW-0150">Chloroplast</keyword>
<keyword id="KW-0934">Plastid</keyword>
<keyword id="KW-0687">Ribonucleoprotein</keyword>
<keyword id="KW-0689">Ribosomal protein</keyword>
<sequence length="56" mass="6392">MAVPKKRTSKSKTNLRKTVWKKKALKQAIQAYFIASRASKKLNLEKAITKDLNTES</sequence>